<accession>Q07NF5</accession>
<gene>
    <name evidence="1" type="primary">trpD</name>
    <name type="ordered locus">RPE_2591</name>
</gene>
<organism>
    <name type="scientific">Rhodopseudomonas palustris (strain BisA53)</name>
    <dbReference type="NCBI Taxonomy" id="316055"/>
    <lineage>
        <taxon>Bacteria</taxon>
        <taxon>Pseudomonadati</taxon>
        <taxon>Pseudomonadota</taxon>
        <taxon>Alphaproteobacteria</taxon>
        <taxon>Hyphomicrobiales</taxon>
        <taxon>Nitrobacteraceae</taxon>
        <taxon>Rhodopseudomonas</taxon>
    </lineage>
</organism>
<comment type="function">
    <text evidence="1">Catalyzes the transfer of the phosphoribosyl group of 5-phosphorylribose-1-pyrophosphate (PRPP) to anthranilate to yield N-(5'-phosphoribosyl)-anthranilate (PRA).</text>
</comment>
<comment type="catalytic activity">
    <reaction evidence="1">
        <text>N-(5-phospho-beta-D-ribosyl)anthranilate + diphosphate = 5-phospho-alpha-D-ribose 1-diphosphate + anthranilate</text>
        <dbReference type="Rhea" id="RHEA:11768"/>
        <dbReference type="ChEBI" id="CHEBI:16567"/>
        <dbReference type="ChEBI" id="CHEBI:18277"/>
        <dbReference type="ChEBI" id="CHEBI:33019"/>
        <dbReference type="ChEBI" id="CHEBI:58017"/>
        <dbReference type="EC" id="2.4.2.18"/>
    </reaction>
</comment>
<comment type="cofactor">
    <cofactor evidence="1">
        <name>Mg(2+)</name>
        <dbReference type="ChEBI" id="CHEBI:18420"/>
    </cofactor>
    <text evidence="1">Binds 2 magnesium ions per monomer.</text>
</comment>
<comment type="pathway">
    <text evidence="1">Amino-acid biosynthesis; L-tryptophan biosynthesis; L-tryptophan from chorismate: step 2/5.</text>
</comment>
<comment type="subunit">
    <text evidence="1">Homodimer.</text>
</comment>
<comment type="similarity">
    <text evidence="1">Belongs to the anthranilate phosphoribosyltransferase family.</text>
</comment>
<name>TRPD_RHOP5</name>
<sequence length="339" mass="34322">MIDFKSIIGKVATGATLTRDEATAAFDAMMSGEATPSQMGALLMGLRVRGETVDEIAGAVSAMRAKMLTVTAPPDAVDVVGTGGDGSGSVNVSTCAAFIVAGCGAPVAKHGNRALSSRSGAADVLAALGVKIDITPDQVGRCIAEAGIGFMFAPTHHPAMKNVGPTRVELATRTIFNMLGPLSNPAGVKRQMVGVFSRQWVQPLAQVLKNLGSEAVWVVHGSDGLDEITISGPTFVAALKDGEITTFEITPEDAGLPRAPAESLKGGDAEANAAALKGVLQGKPSPYRDVALLNAGATLIVAGRAGDLKEAVALGAQSIDSGAAAARLAKLIAVSNTAE</sequence>
<reference key="1">
    <citation type="submission" date="2006-09" db="EMBL/GenBank/DDBJ databases">
        <title>Complete sequence of Rhodopseudomonas palustris BisA53.</title>
        <authorList>
            <consortium name="US DOE Joint Genome Institute"/>
            <person name="Copeland A."/>
            <person name="Lucas S."/>
            <person name="Lapidus A."/>
            <person name="Barry K."/>
            <person name="Detter J.C."/>
            <person name="Glavina del Rio T."/>
            <person name="Hammon N."/>
            <person name="Israni S."/>
            <person name="Dalin E."/>
            <person name="Tice H."/>
            <person name="Pitluck S."/>
            <person name="Chain P."/>
            <person name="Malfatti S."/>
            <person name="Shin M."/>
            <person name="Vergez L."/>
            <person name="Schmutz J."/>
            <person name="Larimer F."/>
            <person name="Land M."/>
            <person name="Hauser L."/>
            <person name="Pelletier D.A."/>
            <person name="Kyrpides N."/>
            <person name="Kim E."/>
            <person name="Harwood C.S."/>
            <person name="Oda Y."/>
            <person name="Richardson P."/>
        </authorList>
    </citation>
    <scope>NUCLEOTIDE SEQUENCE [LARGE SCALE GENOMIC DNA]</scope>
    <source>
        <strain>BisA53</strain>
    </source>
</reference>
<protein>
    <recommendedName>
        <fullName evidence="1">Anthranilate phosphoribosyltransferase</fullName>
        <ecNumber evidence="1">2.4.2.18</ecNumber>
    </recommendedName>
</protein>
<proteinExistence type="inferred from homology"/>
<dbReference type="EC" id="2.4.2.18" evidence="1"/>
<dbReference type="EMBL" id="CP000463">
    <property type="protein sequence ID" value="ABJ06529.1"/>
    <property type="molecule type" value="Genomic_DNA"/>
</dbReference>
<dbReference type="SMR" id="Q07NF5"/>
<dbReference type="STRING" id="316055.RPE_2591"/>
<dbReference type="KEGG" id="rpe:RPE_2591"/>
<dbReference type="eggNOG" id="COG0547">
    <property type="taxonomic scope" value="Bacteria"/>
</dbReference>
<dbReference type="HOGENOM" id="CLU_034315_2_1_5"/>
<dbReference type="OrthoDB" id="9806430at2"/>
<dbReference type="UniPathway" id="UPA00035">
    <property type="reaction ID" value="UER00041"/>
</dbReference>
<dbReference type="GO" id="GO:0005829">
    <property type="term" value="C:cytosol"/>
    <property type="evidence" value="ECO:0007669"/>
    <property type="project" value="TreeGrafter"/>
</dbReference>
<dbReference type="GO" id="GO:0004048">
    <property type="term" value="F:anthranilate phosphoribosyltransferase activity"/>
    <property type="evidence" value="ECO:0007669"/>
    <property type="project" value="UniProtKB-UniRule"/>
</dbReference>
<dbReference type="GO" id="GO:0000287">
    <property type="term" value="F:magnesium ion binding"/>
    <property type="evidence" value="ECO:0007669"/>
    <property type="project" value="UniProtKB-UniRule"/>
</dbReference>
<dbReference type="GO" id="GO:0000162">
    <property type="term" value="P:L-tryptophan biosynthetic process"/>
    <property type="evidence" value="ECO:0007669"/>
    <property type="project" value="UniProtKB-UniRule"/>
</dbReference>
<dbReference type="FunFam" id="3.40.1030.10:FF:000002">
    <property type="entry name" value="Anthranilate phosphoribosyltransferase"/>
    <property type="match status" value="1"/>
</dbReference>
<dbReference type="Gene3D" id="3.40.1030.10">
    <property type="entry name" value="Nucleoside phosphorylase/phosphoribosyltransferase catalytic domain"/>
    <property type="match status" value="1"/>
</dbReference>
<dbReference type="Gene3D" id="1.20.970.10">
    <property type="entry name" value="Transferase, Pyrimidine Nucleoside Phosphorylase, Chain C"/>
    <property type="match status" value="1"/>
</dbReference>
<dbReference type="HAMAP" id="MF_00211">
    <property type="entry name" value="TrpD"/>
    <property type="match status" value="1"/>
</dbReference>
<dbReference type="InterPro" id="IPR005940">
    <property type="entry name" value="Anthranilate_Pribosyl_Tfrase"/>
</dbReference>
<dbReference type="InterPro" id="IPR000312">
    <property type="entry name" value="Glycosyl_Trfase_fam3"/>
</dbReference>
<dbReference type="InterPro" id="IPR017459">
    <property type="entry name" value="Glycosyl_Trfase_fam3_N_dom"/>
</dbReference>
<dbReference type="InterPro" id="IPR036320">
    <property type="entry name" value="Glycosyl_Trfase_fam3_N_dom_sf"/>
</dbReference>
<dbReference type="InterPro" id="IPR035902">
    <property type="entry name" value="Nuc_phospho_transferase"/>
</dbReference>
<dbReference type="NCBIfam" id="TIGR01245">
    <property type="entry name" value="trpD"/>
    <property type="match status" value="1"/>
</dbReference>
<dbReference type="PANTHER" id="PTHR43285">
    <property type="entry name" value="ANTHRANILATE PHOSPHORIBOSYLTRANSFERASE"/>
    <property type="match status" value="1"/>
</dbReference>
<dbReference type="PANTHER" id="PTHR43285:SF2">
    <property type="entry name" value="ANTHRANILATE PHOSPHORIBOSYLTRANSFERASE"/>
    <property type="match status" value="1"/>
</dbReference>
<dbReference type="Pfam" id="PF02885">
    <property type="entry name" value="Glycos_trans_3N"/>
    <property type="match status" value="1"/>
</dbReference>
<dbReference type="Pfam" id="PF00591">
    <property type="entry name" value="Glycos_transf_3"/>
    <property type="match status" value="1"/>
</dbReference>
<dbReference type="SUPFAM" id="SSF52418">
    <property type="entry name" value="Nucleoside phosphorylase/phosphoribosyltransferase catalytic domain"/>
    <property type="match status" value="1"/>
</dbReference>
<dbReference type="SUPFAM" id="SSF47648">
    <property type="entry name" value="Nucleoside phosphorylase/phosphoribosyltransferase N-terminal domain"/>
    <property type="match status" value="1"/>
</dbReference>
<keyword id="KW-0028">Amino-acid biosynthesis</keyword>
<keyword id="KW-0057">Aromatic amino acid biosynthesis</keyword>
<keyword id="KW-0328">Glycosyltransferase</keyword>
<keyword id="KW-0460">Magnesium</keyword>
<keyword id="KW-0479">Metal-binding</keyword>
<keyword id="KW-0808">Transferase</keyword>
<keyword id="KW-0822">Tryptophan biosynthesis</keyword>
<feature type="chain" id="PRO_1000043056" description="Anthranilate phosphoribosyltransferase">
    <location>
        <begin position="1"/>
        <end position="339"/>
    </location>
</feature>
<feature type="binding site" evidence="1">
    <location>
        <position position="81"/>
    </location>
    <ligand>
        <name>5-phospho-alpha-D-ribose 1-diphosphate</name>
        <dbReference type="ChEBI" id="CHEBI:58017"/>
    </ligand>
</feature>
<feature type="binding site" evidence="1">
    <location>
        <position position="81"/>
    </location>
    <ligand>
        <name>anthranilate</name>
        <dbReference type="ChEBI" id="CHEBI:16567"/>
        <label>1</label>
    </ligand>
</feature>
<feature type="binding site" evidence="1">
    <location>
        <begin position="84"/>
        <end position="85"/>
    </location>
    <ligand>
        <name>5-phospho-alpha-D-ribose 1-diphosphate</name>
        <dbReference type="ChEBI" id="CHEBI:58017"/>
    </ligand>
</feature>
<feature type="binding site" evidence="1">
    <location>
        <position position="89"/>
    </location>
    <ligand>
        <name>5-phospho-alpha-D-ribose 1-diphosphate</name>
        <dbReference type="ChEBI" id="CHEBI:58017"/>
    </ligand>
</feature>
<feature type="binding site" evidence="1">
    <location>
        <begin position="91"/>
        <end position="94"/>
    </location>
    <ligand>
        <name>5-phospho-alpha-D-ribose 1-diphosphate</name>
        <dbReference type="ChEBI" id="CHEBI:58017"/>
    </ligand>
</feature>
<feature type="binding site" evidence="1">
    <location>
        <position position="93"/>
    </location>
    <ligand>
        <name>Mg(2+)</name>
        <dbReference type="ChEBI" id="CHEBI:18420"/>
        <label>1</label>
    </ligand>
</feature>
<feature type="binding site" evidence="1">
    <location>
        <begin position="109"/>
        <end position="117"/>
    </location>
    <ligand>
        <name>5-phospho-alpha-D-ribose 1-diphosphate</name>
        <dbReference type="ChEBI" id="CHEBI:58017"/>
    </ligand>
</feature>
<feature type="binding site" evidence="1">
    <location>
        <position position="112"/>
    </location>
    <ligand>
        <name>anthranilate</name>
        <dbReference type="ChEBI" id="CHEBI:16567"/>
        <label>1</label>
    </ligand>
</feature>
<feature type="binding site" evidence="1">
    <location>
        <position position="121"/>
    </location>
    <ligand>
        <name>5-phospho-alpha-D-ribose 1-diphosphate</name>
        <dbReference type="ChEBI" id="CHEBI:58017"/>
    </ligand>
</feature>
<feature type="binding site" evidence="1">
    <location>
        <position position="167"/>
    </location>
    <ligand>
        <name>anthranilate</name>
        <dbReference type="ChEBI" id="CHEBI:16567"/>
        <label>2</label>
    </ligand>
</feature>
<feature type="binding site" evidence="1">
    <location>
        <position position="226"/>
    </location>
    <ligand>
        <name>Mg(2+)</name>
        <dbReference type="ChEBI" id="CHEBI:18420"/>
        <label>2</label>
    </ligand>
</feature>
<feature type="binding site" evidence="1">
    <location>
        <position position="227"/>
    </location>
    <ligand>
        <name>Mg(2+)</name>
        <dbReference type="ChEBI" id="CHEBI:18420"/>
        <label>1</label>
    </ligand>
</feature>
<feature type="binding site" evidence="1">
    <location>
        <position position="227"/>
    </location>
    <ligand>
        <name>Mg(2+)</name>
        <dbReference type="ChEBI" id="CHEBI:18420"/>
        <label>2</label>
    </ligand>
</feature>
<evidence type="ECO:0000255" key="1">
    <source>
        <dbReference type="HAMAP-Rule" id="MF_00211"/>
    </source>
</evidence>